<evidence type="ECO:0000255" key="1">
    <source>
        <dbReference type="HAMAP-Rule" id="MF_01849"/>
    </source>
</evidence>
<evidence type="ECO:0000255" key="2">
    <source>
        <dbReference type="PROSITE-ProRule" id="PRU01266"/>
    </source>
</evidence>
<proteinExistence type="inferred from homology"/>
<comment type="function">
    <text evidence="1">Specifically methylates position 2 of adenine 2503 in 23S rRNA and position 2 of adenine 37 in tRNAs. m2A2503 modification seems to play a crucial role in the proofreading step occurring at the peptidyl transferase center and thus would serve to optimize ribosomal fidelity.</text>
</comment>
<comment type="catalytic activity">
    <reaction evidence="1">
        <text>adenosine(2503) in 23S rRNA + 2 reduced [2Fe-2S]-[ferredoxin] + 2 S-adenosyl-L-methionine = 2-methyladenosine(2503) in 23S rRNA + 5'-deoxyadenosine + L-methionine + 2 oxidized [2Fe-2S]-[ferredoxin] + S-adenosyl-L-homocysteine</text>
        <dbReference type="Rhea" id="RHEA:42916"/>
        <dbReference type="Rhea" id="RHEA-COMP:10000"/>
        <dbReference type="Rhea" id="RHEA-COMP:10001"/>
        <dbReference type="Rhea" id="RHEA-COMP:10152"/>
        <dbReference type="Rhea" id="RHEA-COMP:10282"/>
        <dbReference type="ChEBI" id="CHEBI:17319"/>
        <dbReference type="ChEBI" id="CHEBI:33737"/>
        <dbReference type="ChEBI" id="CHEBI:33738"/>
        <dbReference type="ChEBI" id="CHEBI:57844"/>
        <dbReference type="ChEBI" id="CHEBI:57856"/>
        <dbReference type="ChEBI" id="CHEBI:59789"/>
        <dbReference type="ChEBI" id="CHEBI:74411"/>
        <dbReference type="ChEBI" id="CHEBI:74497"/>
        <dbReference type="EC" id="2.1.1.192"/>
    </reaction>
</comment>
<comment type="catalytic activity">
    <reaction evidence="1">
        <text>adenosine(37) in tRNA + 2 reduced [2Fe-2S]-[ferredoxin] + 2 S-adenosyl-L-methionine = 2-methyladenosine(37) in tRNA + 5'-deoxyadenosine + L-methionine + 2 oxidized [2Fe-2S]-[ferredoxin] + S-adenosyl-L-homocysteine</text>
        <dbReference type="Rhea" id="RHEA:43332"/>
        <dbReference type="Rhea" id="RHEA-COMP:10000"/>
        <dbReference type="Rhea" id="RHEA-COMP:10001"/>
        <dbReference type="Rhea" id="RHEA-COMP:10162"/>
        <dbReference type="Rhea" id="RHEA-COMP:10485"/>
        <dbReference type="ChEBI" id="CHEBI:17319"/>
        <dbReference type="ChEBI" id="CHEBI:33737"/>
        <dbReference type="ChEBI" id="CHEBI:33738"/>
        <dbReference type="ChEBI" id="CHEBI:57844"/>
        <dbReference type="ChEBI" id="CHEBI:57856"/>
        <dbReference type="ChEBI" id="CHEBI:59789"/>
        <dbReference type="ChEBI" id="CHEBI:74411"/>
        <dbReference type="ChEBI" id="CHEBI:74497"/>
        <dbReference type="EC" id="2.1.1.192"/>
    </reaction>
</comment>
<comment type="cofactor">
    <cofactor evidence="1">
        <name>[4Fe-4S] cluster</name>
        <dbReference type="ChEBI" id="CHEBI:49883"/>
    </cofactor>
    <text evidence="1">Binds 1 [4Fe-4S] cluster. The cluster is coordinated with 3 cysteines and an exchangeable S-adenosyl-L-methionine.</text>
</comment>
<comment type="subcellular location">
    <subcellularLocation>
        <location evidence="1">Cytoplasm</location>
    </subcellularLocation>
</comment>
<comment type="miscellaneous">
    <text evidence="1">Reaction proceeds by a ping-pong mechanism involving intermediate methylation of a conserved cysteine residue.</text>
</comment>
<comment type="similarity">
    <text evidence="1">Belongs to the radical SAM superfamily. RlmN family.</text>
</comment>
<reference key="1">
    <citation type="journal article" date="2001" name="Nature">
        <title>Genome sequence of enterohaemorrhagic Escherichia coli O157:H7.</title>
        <authorList>
            <person name="Perna N.T."/>
            <person name="Plunkett G. III"/>
            <person name="Burland V."/>
            <person name="Mau B."/>
            <person name="Glasner J.D."/>
            <person name="Rose D.J."/>
            <person name="Mayhew G.F."/>
            <person name="Evans P.S."/>
            <person name="Gregor J."/>
            <person name="Kirkpatrick H.A."/>
            <person name="Posfai G."/>
            <person name="Hackett J."/>
            <person name="Klink S."/>
            <person name="Boutin A."/>
            <person name="Shao Y."/>
            <person name="Miller L."/>
            <person name="Grotbeck E.J."/>
            <person name="Davis N.W."/>
            <person name="Lim A."/>
            <person name="Dimalanta E.T."/>
            <person name="Potamousis K."/>
            <person name="Apodaca J."/>
            <person name="Anantharaman T.S."/>
            <person name="Lin J."/>
            <person name="Yen G."/>
            <person name="Schwartz D.C."/>
            <person name="Welch R.A."/>
            <person name="Blattner F.R."/>
        </authorList>
    </citation>
    <scope>NUCLEOTIDE SEQUENCE [LARGE SCALE GENOMIC DNA]</scope>
    <source>
        <strain>O157:H7 / EDL933 / ATCC 700927 / EHEC</strain>
    </source>
</reference>
<reference key="2">
    <citation type="journal article" date="2001" name="DNA Res.">
        <title>Complete genome sequence of enterohemorrhagic Escherichia coli O157:H7 and genomic comparison with a laboratory strain K-12.</title>
        <authorList>
            <person name="Hayashi T."/>
            <person name="Makino K."/>
            <person name="Ohnishi M."/>
            <person name="Kurokawa K."/>
            <person name="Ishii K."/>
            <person name="Yokoyama K."/>
            <person name="Han C.-G."/>
            <person name="Ohtsubo E."/>
            <person name="Nakayama K."/>
            <person name="Murata T."/>
            <person name="Tanaka M."/>
            <person name="Tobe T."/>
            <person name="Iida T."/>
            <person name="Takami H."/>
            <person name="Honda T."/>
            <person name="Sasakawa C."/>
            <person name="Ogasawara N."/>
            <person name="Yasunaga T."/>
            <person name="Kuhara S."/>
            <person name="Shiba T."/>
            <person name="Hattori M."/>
            <person name="Shinagawa H."/>
        </authorList>
    </citation>
    <scope>NUCLEOTIDE SEQUENCE [LARGE SCALE GENOMIC DNA]</scope>
    <source>
        <strain>O157:H7 / Sakai / RIMD 0509952 / EHEC</strain>
    </source>
</reference>
<accession>Q8XAA4</accession>
<accession>Q7ABM7</accession>
<dbReference type="EC" id="2.1.1.192" evidence="1"/>
<dbReference type="EMBL" id="AE005174">
    <property type="protein sequence ID" value="AAG57627.1"/>
    <property type="molecule type" value="Genomic_DNA"/>
</dbReference>
<dbReference type="EMBL" id="BA000007">
    <property type="protein sequence ID" value="BAB36802.1"/>
    <property type="molecule type" value="Genomic_DNA"/>
</dbReference>
<dbReference type="PIR" id="C91051">
    <property type="entry name" value="C91051"/>
</dbReference>
<dbReference type="PIR" id="G85895">
    <property type="entry name" value="G85895"/>
</dbReference>
<dbReference type="RefSeq" id="NP_311406.1">
    <property type="nucleotide sequence ID" value="NC_002695.1"/>
</dbReference>
<dbReference type="RefSeq" id="WP_000003314.1">
    <property type="nucleotide sequence ID" value="NZ_VOAI01000001.1"/>
</dbReference>
<dbReference type="SMR" id="Q8XAA4"/>
<dbReference type="STRING" id="155864.Z3780"/>
<dbReference type="GeneID" id="915207"/>
<dbReference type="KEGG" id="ece:Z3780"/>
<dbReference type="KEGG" id="ecs:ECs_3379"/>
<dbReference type="PATRIC" id="fig|386585.9.peg.3530"/>
<dbReference type="eggNOG" id="COG0820">
    <property type="taxonomic scope" value="Bacteria"/>
</dbReference>
<dbReference type="HOGENOM" id="CLU_029101_0_0_6"/>
<dbReference type="OMA" id="GTIKWAM"/>
<dbReference type="Proteomes" id="UP000000558">
    <property type="component" value="Chromosome"/>
</dbReference>
<dbReference type="Proteomes" id="UP000002519">
    <property type="component" value="Chromosome"/>
</dbReference>
<dbReference type="GO" id="GO:0005737">
    <property type="term" value="C:cytoplasm"/>
    <property type="evidence" value="ECO:0007669"/>
    <property type="project" value="UniProtKB-SubCell"/>
</dbReference>
<dbReference type="GO" id="GO:0051539">
    <property type="term" value="F:4 iron, 4 sulfur cluster binding"/>
    <property type="evidence" value="ECO:0007669"/>
    <property type="project" value="UniProtKB-UniRule"/>
</dbReference>
<dbReference type="GO" id="GO:0046872">
    <property type="term" value="F:metal ion binding"/>
    <property type="evidence" value="ECO:0007669"/>
    <property type="project" value="UniProtKB-KW"/>
</dbReference>
<dbReference type="GO" id="GO:0070040">
    <property type="term" value="F:rRNA (adenine(2503)-C2-)-methyltransferase activity"/>
    <property type="evidence" value="ECO:0007669"/>
    <property type="project" value="UniProtKB-UniRule"/>
</dbReference>
<dbReference type="GO" id="GO:0019843">
    <property type="term" value="F:rRNA binding"/>
    <property type="evidence" value="ECO:0007669"/>
    <property type="project" value="UniProtKB-UniRule"/>
</dbReference>
<dbReference type="GO" id="GO:0002935">
    <property type="term" value="F:tRNA (adenine(37)-C2)-methyltransferase activity"/>
    <property type="evidence" value="ECO:0007669"/>
    <property type="project" value="UniProtKB-UniRule"/>
</dbReference>
<dbReference type="GO" id="GO:0000049">
    <property type="term" value="F:tRNA binding"/>
    <property type="evidence" value="ECO:0007669"/>
    <property type="project" value="UniProtKB-UniRule"/>
</dbReference>
<dbReference type="GO" id="GO:0070475">
    <property type="term" value="P:rRNA base methylation"/>
    <property type="evidence" value="ECO:0007669"/>
    <property type="project" value="UniProtKB-UniRule"/>
</dbReference>
<dbReference type="GO" id="GO:0030488">
    <property type="term" value="P:tRNA methylation"/>
    <property type="evidence" value="ECO:0007669"/>
    <property type="project" value="UniProtKB-UniRule"/>
</dbReference>
<dbReference type="CDD" id="cd01335">
    <property type="entry name" value="Radical_SAM"/>
    <property type="match status" value="1"/>
</dbReference>
<dbReference type="FunFam" id="1.10.150.530:FF:000001">
    <property type="entry name" value="Dual-specificity RNA methyltransferase RlmN"/>
    <property type="match status" value="1"/>
</dbReference>
<dbReference type="FunFam" id="3.20.20.70:FF:000008">
    <property type="entry name" value="Dual-specificity RNA methyltransferase RlmN"/>
    <property type="match status" value="1"/>
</dbReference>
<dbReference type="Gene3D" id="1.10.150.530">
    <property type="match status" value="1"/>
</dbReference>
<dbReference type="Gene3D" id="3.20.20.70">
    <property type="entry name" value="Aldolase class I"/>
    <property type="match status" value="1"/>
</dbReference>
<dbReference type="HAMAP" id="MF_01849">
    <property type="entry name" value="RNA_methyltr_RlmN"/>
    <property type="match status" value="1"/>
</dbReference>
<dbReference type="InterPro" id="IPR013785">
    <property type="entry name" value="Aldolase_TIM"/>
</dbReference>
<dbReference type="InterPro" id="IPR040072">
    <property type="entry name" value="Methyltransferase_A"/>
</dbReference>
<dbReference type="InterPro" id="IPR048641">
    <property type="entry name" value="RlmN_N"/>
</dbReference>
<dbReference type="InterPro" id="IPR027492">
    <property type="entry name" value="RNA_MTrfase_RlmN"/>
</dbReference>
<dbReference type="InterPro" id="IPR004383">
    <property type="entry name" value="rRNA_lsu_MTrfase_RlmN/Cfr"/>
</dbReference>
<dbReference type="InterPro" id="IPR007197">
    <property type="entry name" value="rSAM"/>
</dbReference>
<dbReference type="NCBIfam" id="NF008396">
    <property type="entry name" value="PRK11194.1"/>
    <property type="match status" value="1"/>
</dbReference>
<dbReference type="NCBIfam" id="TIGR00048">
    <property type="entry name" value="rRNA_mod_RlmN"/>
    <property type="match status" value="1"/>
</dbReference>
<dbReference type="PANTHER" id="PTHR30544">
    <property type="entry name" value="23S RRNA METHYLTRANSFERASE"/>
    <property type="match status" value="1"/>
</dbReference>
<dbReference type="PANTHER" id="PTHR30544:SF5">
    <property type="entry name" value="RADICAL SAM CORE DOMAIN-CONTAINING PROTEIN"/>
    <property type="match status" value="1"/>
</dbReference>
<dbReference type="Pfam" id="PF04055">
    <property type="entry name" value="Radical_SAM"/>
    <property type="match status" value="1"/>
</dbReference>
<dbReference type="Pfam" id="PF21016">
    <property type="entry name" value="RlmN_N"/>
    <property type="match status" value="1"/>
</dbReference>
<dbReference type="PIRSF" id="PIRSF006004">
    <property type="entry name" value="CHP00048"/>
    <property type="match status" value="1"/>
</dbReference>
<dbReference type="SFLD" id="SFLDF00275">
    <property type="entry name" value="adenosine_C2_methyltransferase"/>
    <property type="match status" value="1"/>
</dbReference>
<dbReference type="SFLD" id="SFLDS00029">
    <property type="entry name" value="Radical_SAM"/>
    <property type="match status" value="1"/>
</dbReference>
<dbReference type="SUPFAM" id="SSF102114">
    <property type="entry name" value="Radical SAM enzymes"/>
    <property type="match status" value="1"/>
</dbReference>
<dbReference type="PROSITE" id="PS51918">
    <property type="entry name" value="RADICAL_SAM"/>
    <property type="match status" value="1"/>
</dbReference>
<organism>
    <name type="scientific">Escherichia coli O157:H7</name>
    <dbReference type="NCBI Taxonomy" id="83334"/>
    <lineage>
        <taxon>Bacteria</taxon>
        <taxon>Pseudomonadati</taxon>
        <taxon>Pseudomonadota</taxon>
        <taxon>Gammaproteobacteria</taxon>
        <taxon>Enterobacterales</taxon>
        <taxon>Enterobacteriaceae</taxon>
        <taxon>Escherichia</taxon>
    </lineage>
</organism>
<name>RLMN_ECO57</name>
<gene>
    <name evidence="1" type="primary">rlmN</name>
    <name type="ordered locus">Z3780</name>
    <name type="ordered locus">ECs3379</name>
</gene>
<protein>
    <recommendedName>
        <fullName evidence="1">Dual-specificity RNA methyltransferase RlmN</fullName>
        <ecNumber evidence="1">2.1.1.192</ecNumber>
    </recommendedName>
    <alternativeName>
        <fullName evidence="1">23S rRNA (adenine(2503)-C(2))-methyltransferase</fullName>
    </alternativeName>
    <alternativeName>
        <fullName evidence="1">23S rRNA m2A2503 methyltransferase</fullName>
    </alternativeName>
    <alternativeName>
        <fullName evidence="1">Ribosomal RNA large subunit methyltransferase N</fullName>
    </alternativeName>
    <alternativeName>
        <fullName evidence="1">tRNA (adenine(37)-C(2))-methyltransferase</fullName>
    </alternativeName>
    <alternativeName>
        <fullName evidence="1">tRNA m2A37 methyltransferase</fullName>
    </alternativeName>
</protein>
<keyword id="KW-0004">4Fe-4S</keyword>
<keyword id="KW-0963">Cytoplasm</keyword>
<keyword id="KW-1015">Disulfide bond</keyword>
<keyword id="KW-0408">Iron</keyword>
<keyword id="KW-0411">Iron-sulfur</keyword>
<keyword id="KW-0479">Metal-binding</keyword>
<keyword id="KW-0489">Methyltransferase</keyword>
<keyword id="KW-1185">Reference proteome</keyword>
<keyword id="KW-0698">rRNA processing</keyword>
<keyword id="KW-0949">S-adenosyl-L-methionine</keyword>
<keyword id="KW-0808">Transferase</keyword>
<keyword id="KW-0819">tRNA processing</keyword>
<feature type="chain" id="PRO_0000350169" description="Dual-specificity RNA methyltransferase RlmN">
    <location>
        <begin position="1"/>
        <end position="384"/>
    </location>
</feature>
<feature type="domain" description="Radical SAM core" evidence="2">
    <location>
        <begin position="111"/>
        <end position="350"/>
    </location>
</feature>
<feature type="active site" description="Proton acceptor" evidence="1">
    <location>
        <position position="105"/>
    </location>
</feature>
<feature type="active site" description="S-methylcysteine intermediate" evidence="1">
    <location>
        <position position="355"/>
    </location>
</feature>
<feature type="binding site" evidence="1">
    <location>
        <position position="125"/>
    </location>
    <ligand>
        <name>[4Fe-4S] cluster</name>
        <dbReference type="ChEBI" id="CHEBI:49883"/>
        <note>4Fe-4S-S-AdoMet</note>
    </ligand>
</feature>
<feature type="binding site" evidence="1">
    <location>
        <position position="129"/>
    </location>
    <ligand>
        <name>[4Fe-4S] cluster</name>
        <dbReference type="ChEBI" id="CHEBI:49883"/>
        <note>4Fe-4S-S-AdoMet</note>
    </ligand>
</feature>
<feature type="binding site" evidence="1">
    <location>
        <position position="132"/>
    </location>
    <ligand>
        <name>[4Fe-4S] cluster</name>
        <dbReference type="ChEBI" id="CHEBI:49883"/>
        <note>4Fe-4S-S-AdoMet</note>
    </ligand>
</feature>
<feature type="binding site" evidence="1">
    <location>
        <begin position="179"/>
        <end position="180"/>
    </location>
    <ligand>
        <name>S-adenosyl-L-methionine</name>
        <dbReference type="ChEBI" id="CHEBI:59789"/>
    </ligand>
</feature>
<feature type="binding site" evidence="1">
    <location>
        <position position="211"/>
    </location>
    <ligand>
        <name>S-adenosyl-L-methionine</name>
        <dbReference type="ChEBI" id="CHEBI:59789"/>
    </ligand>
</feature>
<feature type="binding site" evidence="1">
    <location>
        <begin position="233"/>
        <end position="235"/>
    </location>
    <ligand>
        <name>S-adenosyl-L-methionine</name>
        <dbReference type="ChEBI" id="CHEBI:59789"/>
    </ligand>
</feature>
<feature type="binding site" evidence="1">
    <location>
        <position position="312"/>
    </location>
    <ligand>
        <name>S-adenosyl-L-methionine</name>
        <dbReference type="ChEBI" id="CHEBI:59789"/>
    </ligand>
</feature>
<feature type="disulfide bond" description="(transient)" evidence="1">
    <location>
        <begin position="118"/>
        <end position="355"/>
    </location>
</feature>
<sequence>MSEQLVTPENVTTKDGKINLLDLNRQQMREFFKDLGEKPFRADQVMKWMYHYCCDNFDEMTDINKVLRGKLKEVAEIRAPEVVEEQRSSDGTIKWAIAVGDQRVETVYIPEDDRATLCVSSQVGCALECKFCSTAQQGFNRNLRVSEIIGQVWRAAKIVGAAKVTGQRPITNVVMMGMGEPLLNLNNVVPAMEIMLDDFGFGLSKRRVTLSTSGVVPALDKLGDMIDVALAISLHAPNDEIRDEIVPINKKYNIETFLAAVRRYLEKSNANQGRVTIEYVMLDHVNDGTEHAHQLAELLKDTPCKINLIPWNPFPAAPYGRSSNSRIDRFSKVLMSYGFTTIVRKTRGDDIDAACGQLAGDVIDRTKRTLRKRMQGEAIDIKAV</sequence>